<sequence length="555" mass="62168">MRDYEGNGVDIDNNGASPYSQHISRDHENERDSSRSRDKERDKGRDKDRDRDRNRDRDRDRDRVKERDKDRHRDRDGEKDRDRHHRDRHRDRSDRRERERTRDRDEDDLHRSRDYDRRRDNDKDREDRRRHRPSSRGRSEHRSKSRSRSPSKSKRISGFDMAPPTTALLPGATDAAGQVPGTNPAIPGLFSNMFPLASSQFGALPMMPVQAMTQQATRHARRVYVGGLPPTANEQSVATFFSHVMYAIGGNTAGPGDAVVNVYINHEKKFAFVEMRSVEEASNAMALDGVIFEGGPVKVRRPSDYNPSLAATLGPSQPSPNLNLAAVGSTPGSSGGLEGPDRIFVGGLPYYFTESQIRELLESFGQLRGFDLVKDRETGNSKGYAFCVYQDVSVTDIACAALNGIKMGDKTLTVRRANQGTTQPNPEQESVLLHAQQQIALQRFMLQPGALATKVLCLTEVVTVDELNDDDDYQDILEDMRTECEKFGALVNVVIPRPNPNGVPTPGLGKVFLEYADVDGSSKARQGLNGRKFGGNQVVAVFYPENKFSEGDYEA</sequence>
<dbReference type="EMBL" id="Y18351">
    <property type="protein sequence ID" value="CAA77136.1"/>
    <property type="molecule type" value="mRNA"/>
</dbReference>
<dbReference type="SMR" id="Q9ZR39"/>
<dbReference type="GO" id="GO:0005634">
    <property type="term" value="C:nucleus"/>
    <property type="evidence" value="ECO:0007669"/>
    <property type="project" value="UniProtKB-SubCell"/>
</dbReference>
<dbReference type="GO" id="GO:0003723">
    <property type="term" value="F:RNA binding"/>
    <property type="evidence" value="ECO:0007669"/>
    <property type="project" value="UniProtKB-KW"/>
</dbReference>
<dbReference type="GO" id="GO:0006397">
    <property type="term" value="P:mRNA processing"/>
    <property type="evidence" value="ECO:0007669"/>
    <property type="project" value="UniProtKB-KW"/>
</dbReference>
<dbReference type="GO" id="GO:0008380">
    <property type="term" value="P:RNA splicing"/>
    <property type="evidence" value="ECO:0007669"/>
    <property type="project" value="UniProtKB-KW"/>
</dbReference>
<dbReference type="CDD" id="cd12230">
    <property type="entry name" value="RRM1_U2AF65"/>
    <property type="match status" value="1"/>
</dbReference>
<dbReference type="CDD" id="cd12231">
    <property type="entry name" value="RRM2_U2AF65"/>
    <property type="match status" value="1"/>
</dbReference>
<dbReference type="CDD" id="cd12232">
    <property type="entry name" value="RRM3_U2AF65"/>
    <property type="match status" value="1"/>
</dbReference>
<dbReference type="FunFam" id="3.30.70.330:FF:000057">
    <property type="entry name" value="U2 snRNP auxiliary factor large subunit"/>
    <property type="match status" value="1"/>
</dbReference>
<dbReference type="FunFam" id="3.30.70.330:FF:000111">
    <property type="entry name" value="U2 snRNP auxiliary factor large subunit"/>
    <property type="match status" value="1"/>
</dbReference>
<dbReference type="FunFam" id="3.30.70.330:FF:000225">
    <property type="entry name" value="U2 snRNP auxiliary factor large subunit"/>
    <property type="match status" value="1"/>
</dbReference>
<dbReference type="Gene3D" id="3.30.70.330">
    <property type="match status" value="3"/>
</dbReference>
<dbReference type="InterPro" id="IPR012677">
    <property type="entry name" value="Nucleotide-bd_a/b_plait_sf"/>
</dbReference>
<dbReference type="InterPro" id="IPR035979">
    <property type="entry name" value="RBD_domain_sf"/>
</dbReference>
<dbReference type="InterPro" id="IPR000504">
    <property type="entry name" value="RRM_dom"/>
</dbReference>
<dbReference type="InterPro" id="IPR003954">
    <property type="entry name" value="RRM_dom_euk"/>
</dbReference>
<dbReference type="InterPro" id="IPR006529">
    <property type="entry name" value="U2AF_lg"/>
</dbReference>
<dbReference type="NCBIfam" id="TIGR01642">
    <property type="entry name" value="U2AF_lg"/>
    <property type="match status" value="1"/>
</dbReference>
<dbReference type="PANTHER" id="PTHR23139">
    <property type="entry name" value="RNA-BINDING PROTEIN"/>
    <property type="match status" value="1"/>
</dbReference>
<dbReference type="Pfam" id="PF00076">
    <property type="entry name" value="RRM_1"/>
    <property type="match status" value="1"/>
</dbReference>
<dbReference type="SMART" id="SM00360">
    <property type="entry name" value="RRM"/>
    <property type="match status" value="3"/>
</dbReference>
<dbReference type="SMART" id="SM00361">
    <property type="entry name" value="RRM_1"/>
    <property type="match status" value="2"/>
</dbReference>
<dbReference type="SUPFAM" id="SSF54928">
    <property type="entry name" value="RNA-binding domain, RBD"/>
    <property type="match status" value="2"/>
</dbReference>
<dbReference type="PROSITE" id="PS50102">
    <property type="entry name" value="RRM"/>
    <property type="match status" value="3"/>
</dbReference>
<evidence type="ECO:0000255" key="1">
    <source>
        <dbReference type="PROSITE-ProRule" id="PRU00176"/>
    </source>
</evidence>
<evidence type="ECO:0000256" key="2">
    <source>
        <dbReference type="SAM" id="MobiDB-lite"/>
    </source>
</evidence>
<evidence type="ECO:0000269" key="3">
    <source>
    </source>
</evidence>
<evidence type="ECO:0000305" key="4"/>
<feature type="chain" id="PRO_0000352269" description="Splicing factor U2af large subunit A">
    <location>
        <begin position="1"/>
        <end position="555"/>
    </location>
</feature>
<feature type="domain" description="RRM 1" evidence="1">
    <location>
        <begin position="221"/>
        <end position="304"/>
    </location>
</feature>
<feature type="domain" description="RRM 2" evidence="1">
    <location>
        <begin position="341"/>
        <end position="419"/>
    </location>
</feature>
<feature type="domain" description="RRM 3" evidence="1">
    <location>
        <begin position="460"/>
        <end position="546"/>
    </location>
</feature>
<feature type="region of interest" description="Disordered" evidence="2">
    <location>
        <begin position="1"/>
        <end position="165"/>
    </location>
</feature>
<feature type="compositionally biased region" description="Basic and acidic residues" evidence="2">
    <location>
        <begin position="23"/>
        <end position="81"/>
    </location>
</feature>
<feature type="compositionally biased region" description="Basic and acidic residues" evidence="2">
    <location>
        <begin position="90"/>
        <end position="127"/>
    </location>
</feature>
<feature type="compositionally biased region" description="Basic residues" evidence="2">
    <location>
        <begin position="143"/>
        <end position="155"/>
    </location>
</feature>
<accession>Q9ZR39</accession>
<proteinExistence type="evidence at transcript level"/>
<protein>
    <recommendedName>
        <fullName>Splicing factor U2af large subunit A</fullName>
    </recommendedName>
    <alternativeName>
        <fullName>NpU2AF65a</fullName>
    </alternativeName>
    <alternativeName>
        <fullName>U2 auxiliary factor 65 kDa subunit A</fullName>
    </alternativeName>
    <alternativeName>
        <fullName>U2 small nuclear ribonucleoprotein auxiliary factor large subunit A</fullName>
        <shortName>U2 snRNP auxiliary factor large subunit A</shortName>
    </alternativeName>
</protein>
<comment type="function">
    <text evidence="3">Necessary for the splicing of pre-mRNA. Binds to the U -enriched regions of plant introns.</text>
</comment>
<comment type="subcellular location">
    <subcellularLocation>
        <location evidence="3">Nucleus</location>
    </subcellularLocation>
</comment>
<comment type="tissue specificity">
    <text evidence="3">Expressed in stems, leaves and apical buds.</text>
</comment>
<comment type="domain">
    <text>N-terminal RS domain has a very strong bias in favor of D over S.</text>
</comment>
<comment type="similarity">
    <text evidence="4">Belongs to the splicing factor SR family.</text>
</comment>
<keyword id="KW-0507">mRNA processing</keyword>
<keyword id="KW-0508">mRNA splicing</keyword>
<keyword id="KW-0539">Nucleus</keyword>
<keyword id="KW-0677">Repeat</keyword>
<keyword id="KW-0694">RNA-binding</keyword>
<reference key="1">
    <citation type="journal article" date="1998" name="J. Biol. Chem.">
        <title>Multiple forms of the U2 small nuclear ribonucleoprotein auxiliary factor U2AF subunits expressed in higher plants.</title>
        <authorList>
            <person name="Domon C."/>
            <person name="Lorkovic Z.J."/>
            <person name="Valcarcel J."/>
            <person name="Filipowicz W."/>
        </authorList>
    </citation>
    <scope>NUCLEOTIDE SEQUENCE [MRNA]</scope>
    <scope>FUNCTION</scope>
    <scope>SUBCELLULAR LOCATION</scope>
    <scope>TISSUE SPECIFICITY</scope>
</reference>
<name>U2A2A_NICPL</name>
<organism>
    <name type="scientific">Nicotiana plumbaginifolia</name>
    <name type="common">Leadwort-leaved tobacco</name>
    <name type="synonym">Tex-Mex tobacco</name>
    <dbReference type="NCBI Taxonomy" id="4092"/>
    <lineage>
        <taxon>Eukaryota</taxon>
        <taxon>Viridiplantae</taxon>
        <taxon>Streptophyta</taxon>
        <taxon>Embryophyta</taxon>
        <taxon>Tracheophyta</taxon>
        <taxon>Spermatophyta</taxon>
        <taxon>Magnoliopsida</taxon>
        <taxon>eudicotyledons</taxon>
        <taxon>Gunneridae</taxon>
        <taxon>Pentapetalae</taxon>
        <taxon>asterids</taxon>
        <taxon>lamiids</taxon>
        <taxon>Solanales</taxon>
        <taxon>Solanaceae</taxon>
        <taxon>Nicotianoideae</taxon>
        <taxon>Nicotianeae</taxon>
        <taxon>Nicotiana</taxon>
    </lineage>
</organism>
<gene>
    <name type="primary">U2AF65A</name>
</gene>